<sequence length="203" mass="22427">MKLRWFAFLVVILAGCSSKQDYRNPPWNAEVPVKRAMQWMPISEKAGAAWGVDPHLITAIIAIESGGNPNAVSKSNAIGLMQLKASTSGRDVYRRMGWRGEPTTSELKNPERNISMGAAYLSILENGPLAGIKDPQVMQYALVVSYANGAGALLRTFSSDRKKAIEKINDLDADEFFEHVVDNHPAPQAPRYIWKLQQALDAM</sequence>
<protein>
    <recommendedName>
        <fullName evidence="1">Endo-type membrane-bound lytic murein transglycosylase A</fullName>
        <ecNumber evidence="1">4.2.2.n2</ecNumber>
    </recommendedName>
    <alternativeName>
        <fullName evidence="1">Peptidoglycan lytic endotransglycosylase</fullName>
    </alternativeName>
</protein>
<proteinExistence type="inferred from homology"/>
<comment type="function">
    <text evidence="1">Murein-degrading enzyme. May play a role in recycling of muropeptides during cell elongation and/or cell division. Preferentially cleaves at a distance of more than two disaccharide units from the ends of the glycan chain.</text>
</comment>
<comment type="catalytic activity">
    <reaction evidence="1">
        <text>Endolytic cleavage of the (1-&gt;4)-beta-glycosidic linkage between N-acetylmuramic acid (MurNAc) and N-acetylglucosamine (GlcNAc) residues in peptidoglycan with concomitant formation of a 1,6-anhydrobond in the MurNAc residue.</text>
        <dbReference type="EC" id="4.2.2.n2"/>
    </reaction>
</comment>
<comment type="subcellular location">
    <subcellularLocation>
        <location evidence="1">Cell outer membrane</location>
        <topology evidence="1">Lipid-anchor</topology>
    </subcellularLocation>
</comment>
<comment type="similarity">
    <text evidence="1">Belongs to the transglycosylase Slt family.</text>
</comment>
<keyword id="KW-0998">Cell outer membrane</keyword>
<keyword id="KW-0961">Cell wall biogenesis/degradation</keyword>
<keyword id="KW-0449">Lipoprotein</keyword>
<keyword id="KW-0456">Lyase</keyword>
<keyword id="KW-0472">Membrane</keyword>
<keyword id="KW-0564">Palmitate</keyword>
<keyword id="KW-1185">Reference proteome</keyword>
<keyword id="KW-0732">Signal</keyword>
<organism>
    <name type="scientific">Salmonella typhimurium (strain LT2 / SGSC1412 / ATCC 700720)</name>
    <dbReference type="NCBI Taxonomy" id="99287"/>
    <lineage>
        <taxon>Bacteria</taxon>
        <taxon>Pseudomonadati</taxon>
        <taxon>Pseudomonadota</taxon>
        <taxon>Gammaproteobacteria</taxon>
        <taxon>Enterobacterales</taxon>
        <taxon>Enterobacteriaceae</taxon>
        <taxon>Salmonella</taxon>
    </lineage>
</organism>
<dbReference type="EC" id="4.2.2.n2" evidence="1"/>
<dbReference type="EMBL" id="AE006468">
    <property type="protein sequence ID" value="AAL20714.1"/>
    <property type="molecule type" value="Genomic_DNA"/>
</dbReference>
<dbReference type="RefSeq" id="NP_460755.1">
    <property type="nucleotide sequence ID" value="NC_003197.2"/>
</dbReference>
<dbReference type="RefSeq" id="WP_000776974.1">
    <property type="nucleotide sequence ID" value="NC_003197.2"/>
</dbReference>
<dbReference type="SMR" id="Q7CQE4"/>
<dbReference type="STRING" id="99287.STM1799"/>
<dbReference type="CAZy" id="GH23">
    <property type="family name" value="Glycoside Hydrolase Family 23"/>
</dbReference>
<dbReference type="PaxDb" id="99287-STM1799"/>
<dbReference type="GeneID" id="1253318"/>
<dbReference type="KEGG" id="stm:STM1799"/>
<dbReference type="PATRIC" id="fig|99287.12.peg.1898"/>
<dbReference type="HOGENOM" id="CLU_103257_0_0_6"/>
<dbReference type="OMA" id="EVYRYMG"/>
<dbReference type="PhylomeDB" id="Q7CQE4"/>
<dbReference type="BioCyc" id="SENT99287:STM1799-MONOMER"/>
<dbReference type="Proteomes" id="UP000001014">
    <property type="component" value="Chromosome"/>
</dbReference>
<dbReference type="GO" id="GO:0009279">
    <property type="term" value="C:cell outer membrane"/>
    <property type="evidence" value="ECO:0007669"/>
    <property type="project" value="UniProtKB-SubCell"/>
</dbReference>
<dbReference type="GO" id="GO:0008932">
    <property type="term" value="F:lytic endotransglycosylase activity"/>
    <property type="evidence" value="ECO:0007669"/>
    <property type="project" value="InterPro"/>
</dbReference>
<dbReference type="GO" id="GO:0016998">
    <property type="term" value="P:cell wall macromolecule catabolic process"/>
    <property type="evidence" value="ECO:0007669"/>
    <property type="project" value="UniProtKB-UniRule"/>
</dbReference>
<dbReference type="GO" id="GO:0071555">
    <property type="term" value="P:cell wall organization"/>
    <property type="evidence" value="ECO:0007669"/>
    <property type="project" value="UniProtKB-KW"/>
</dbReference>
<dbReference type="GO" id="GO:0000270">
    <property type="term" value="P:peptidoglycan metabolic process"/>
    <property type="evidence" value="ECO:0007669"/>
    <property type="project" value="InterPro"/>
</dbReference>
<dbReference type="CDD" id="cd16893">
    <property type="entry name" value="LT_MltC_MltE"/>
    <property type="match status" value="1"/>
</dbReference>
<dbReference type="Gene3D" id="1.10.530.10">
    <property type="match status" value="1"/>
</dbReference>
<dbReference type="HAMAP" id="MF_01381">
    <property type="entry name" value="EmtA"/>
    <property type="match status" value="1"/>
</dbReference>
<dbReference type="InterPro" id="IPR023946">
    <property type="entry name" value="EmtA"/>
</dbReference>
<dbReference type="InterPro" id="IPR023346">
    <property type="entry name" value="Lysozyme-like_dom_sf"/>
</dbReference>
<dbReference type="InterPro" id="IPR000189">
    <property type="entry name" value="Transglyc_AS"/>
</dbReference>
<dbReference type="InterPro" id="IPR008258">
    <property type="entry name" value="Transglycosylase_SLT_dom_1"/>
</dbReference>
<dbReference type="NCBIfam" id="NF012014">
    <property type="entry name" value="PRK15470.1"/>
    <property type="match status" value="1"/>
</dbReference>
<dbReference type="PANTHER" id="PTHR37423:SF4">
    <property type="entry name" value="ENDO-TYPE MEMBRANE-BOUND LYTIC MUREIN TRANSGLYCOSYLASE A"/>
    <property type="match status" value="1"/>
</dbReference>
<dbReference type="PANTHER" id="PTHR37423">
    <property type="entry name" value="SOLUBLE LYTIC MUREIN TRANSGLYCOSYLASE-RELATED"/>
    <property type="match status" value="1"/>
</dbReference>
<dbReference type="Pfam" id="PF01464">
    <property type="entry name" value="SLT"/>
    <property type="match status" value="1"/>
</dbReference>
<dbReference type="SUPFAM" id="SSF53955">
    <property type="entry name" value="Lysozyme-like"/>
    <property type="match status" value="1"/>
</dbReference>
<dbReference type="PROSITE" id="PS51257">
    <property type="entry name" value="PROKAR_LIPOPROTEIN"/>
    <property type="match status" value="1"/>
</dbReference>
<dbReference type="PROSITE" id="PS00922">
    <property type="entry name" value="TRANSGLYCOSYLASE"/>
    <property type="match status" value="1"/>
</dbReference>
<reference key="1">
    <citation type="journal article" date="2001" name="Nature">
        <title>Complete genome sequence of Salmonella enterica serovar Typhimurium LT2.</title>
        <authorList>
            <person name="McClelland M."/>
            <person name="Sanderson K.E."/>
            <person name="Spieth J."/>
            <person name="Clifton S.W."/>
            <person name="Latreille P."/>
            <person name="Courtney L."/>
            <person name="Porwollik S."/>
            <person name="Ali J."/>
            <person name="Dante M."/>
            <person name="Du F."/>
            <person name="Hou S."/>
            <person name="Layman D."/>
            <person name="Leonard S."/>
            <person name="Nguyen C."/>
            <person name="Scott K."/>
            <person name="Holmes A."/>
            <person name="Grewal N."/>
            <person name="Mulvaney E."/>
            <person name="Ryan E."/>
            <person name="Sun H."/>
            <person name="Florea L."/>
            <person name="Miller W."/>
            <person name="Stoneking T."/>
            <person name="Nhan M."/>
            <person name="Waterston R."/>
            <person name="Wilson R.K."/>
        </authorList>
    </citation>
    <scope>NUCLEOTIDE SEQUENCE [LARGE SCALE GENOMIC DNA]</scope>
    <source>
        <strain>LT2 / SGSC1412 / ATCC 700720</strain>
    </source>
</reference>
<name>EMTA_SALTY</name>
<accession>Q7CQE4</accession>
<gene>
    <name evidence="1" type="primary">emtA</name>
    <name type="ordered locus">STM1799</name>
</gene>
<feature type="signal peptide" evidence="1">
    <location>
        <begin position="1"/>
        <end position="15"/>
    </location>
</feature>
<feature type="chain" id="PRO_0000312913" description="Endo-type membrane-bound lytic murein transglycosylase A">
    <location>
        <begin position="16"/>
        <end position="203"/>
    </location>
</feature>
<feature type="lipid moiety-binding region" description="N-palmitoyl cysteine" evidence="1">
    <location>
        <position position="16"/>
    </location>
</feature>
<feature type="lipid moiety-binding region" description="S-diacylglycerol cysteine" evidence="1">
    <location>
        <position position="16"/>
    </location>
</feature>
<evidence type="ECO:0000255" key="1">
    <source>
        <dbReference type="HAMAP-Rule" id="MF_01381"/>
    </source>
</evidence>